<comment type="function">
    <text evidence="1">Involved in unsaturated fatty acids biosynthesis. Catalyzes the dehydration of short chain beta-hydroxyacyl-ACPs and long chain saturated and unsaturated beta-hydroxyacyl-ACPs.</text>
</comment>
<comment type="catalytic activity">
    <reaction evidence="1">
        <text>a (3R)-hydroxyacyl-[ACP] = a (2E)-enoyl-[ACP] + H2O</text>
        <dbReference type="Rhea" id="RHEA:13097"/>
        <dbReference type="Rhea" id="RHEA-COMP:9925"/>
        <dbReference type="Rhea" id="RHEA-COMP:9945"/>
        <dbReference type="ChEBI" id="CHEBI:15377"/>
        <dbReference type="ChEBI" id="CHEBI:78784"/>
        <dbReference type="ChEBI" id="CHEBI:78827"/>
        <dbReference type="EC" id="4.2.1.59"/>
    </reaction>
</comment>
<comment type="subcellular location">
    <subcellularLocation>
        <location evidence="1">Cytoplasm</location>
    </subcellularLocation>
</comment>
<comment type="similarity">
    <text evidence="1">Belongs to the thioester dehydratase family. FabZ subfamily.</text>
</comment>
<sequence length="176" mass="19631">MTTDTHTLHIEEILDLLPHRFPFLLVDRVLDFEEGKFLRAVKNVSFNEPFFQGHFPGKPIFPGVLILEAMAQATGILAFKSRGKLEPGELYYFAGIDEARFKRPVVPGDQMIMEVEFVKERRGLTRFTGVAKVDGEIVCTATMMCARSKPAAPAESVVVKPDVVKPDVVNPVVKES</sequence>
<organism>
    <name type="scientific">Yersinia pseudotuberculosis serotype O:3 (strain YPIII)</name>
    <dbReference type="NCBI Taxonomy" id="502800"/>
    <lineage>
        <taxon>Bacteria</taxon>
        <taxon>Pseudomonadati</taxon>
        <taxon>Pseudomonadota</taxon>
        <taxon>Gammaproteobacteria</taxon>
        <taxon>Enterobacterales</taxon>
        <taxon>Yersiniaceae</taxon>
        <taxon>Yersinia</taxon>
    </lineage>
</organism>
<keyword id="KW-0963">Cytoplasm</keyword>
<keyword id="KW-0441">Lipid A biosynthesis</keyword>
<keyword id="KW-0444">Lipid biosynthesis</keyword>
<keyword id="KW-0443">Lipid metabolism</keyword>
<keyword id="KW-0456">Lyase</keyword>
<evidence type="ECO:0000255" key="1">
    <source>
        <dbReference type="HAMAP-Rule" id="MF_00406"/>
    </source>
</evidence>
<protein>
    <recommendedName>
        <fullName evidence="1">3-hydroxyacyl-[acyl-carrier-protein] dehydratase FabZ</fullName>
        <ecNumber evidence="1">4.2.1.59</ecNumber>
    </recommendedName>
    <alternativeName>
        <fullName evidence="1">(3R)-hydroxymyristoyl-[acyl-carrier-protein] dehydratase</fullName>
        <shortName evidence="1">(3R)-hydroxymyristoyl-ACP dehydrase</shortName>
    </alternativeName>
    <alternativeName>
        <fullName evidence="1">Beta-hydroxyacyl-ACP dehydratase</fullName>
    </alternativeName>
</protein>
<gene>
    <name evidence="1" type="primary">fabZ</name>
    <name type="ordered locus">YPK_1077</name>
</gene>
<name>FABZ_YERPY</name>
<dbReference type="EC" id="4.2.1.59" evidence="1"/>
<dbReference type="EMBL" id="CP000950">
    <property type="protein sequence ID" value="ACA67378.1"/>
    <property type="molecule type" value="Genomic_DNA"/>
</dbReference>
<dbReference type="RefSeq" id="WP_002217656.1">
    <property type="nucleotide sequence ID" value="NZ_CP009792.1"/>
</dbReference>
<dbReference type="SMR" id="B1JQH1"/>
<dbReference type="BindingDB" id="B1JQH1"/>
<dbReference type="KEGG" id="ypy:YPK_1077"/>
<dbReference type="PATRIC" id="fig|502800.11.peg.1709"/>
<dbReference type="GO" id="GO:0005737">
    <property type="term" value="C:cytoplasm"/>
    <property type="evidence" value="ECO:0007669"/>
    <property type="project" value="UniProtKB-SubCell"/>
</dbReference>
<dbReference type="GO" id="GO:0016020">
    <property type="term" value="C:membrane"/>
    <property type="evidence" value="ECO:0007669"/>
    <property type="project" value="GOC"/>
</dbReference>
<dbReference type="GO" id="GO:0019171">
    <property type="term" value="F:(3R)-hydroxyacyl-[acyl-carrier-protein] dehydratase activity"/>
    <property type="evidence" value="ECO:0007669"/>
    <property type="project" value="UniProtKB-EC"/>
</dbReference>
<dbReference type="GO" id="GO:0006633">
    <property type="term" value="P:fatty acid biosynthetic process"/>
    <property type="evidence" value="ECO:0007669"/>
    <property type="project" value="UniProtKB-UniRule"/>
</dbReference>
<dbReference type="GO" id="GO:0009245">
    <property type="term" value="P:lipid A biosynthetic process"/>
    <property type="evidence" value="ECO:0007669"/>
    <property type="project" value="UniProtKB-UniRule"/>
</dbReference>
<dbReference type="CDD" id="cd01288">
    <property type="entry name" value="FabZ"/>
    <property type="match status" value="1"/>
</dbReference>
<dbReference type="FunFam" id="3.10.129.10:FF:000001">
    <property type="entry name" value="3-hydroxyacyl-[acyl-carrier-protein] dehydratase FabZ"/>
    <property type="match status" value="1"/>
</dbReference>
<dbReference type="Gene3D" id="3.10.129.10">
    <property type="entry name" value="Hotdog Thioesterase"/>
    <property type="match status" value="1"/>
</dbReference>
<dbReference type="HAMAP" id="MF_00406">
    <property type="entry name" value="FabZ"/>
    <property type="match status" value="1"/>
</dbReference>
<dbReference type="InterPro" id="IPR013114">
    <property type="entry name" value="FabA_FabZ"/>
</dbReference>
<dbReference type="InterPro" id="IPR010084">
    <property type="entry name" value="FabZ"/>
</dbReference>
<dbReference type="InterPro" id="IPR029069">
    <property type="entry name" value="HotDog_dom_sf"/>
</dbReference>
<dbReference type="NCBIfam" id="TIGR01750">
    <property type="entry name" value="fabZ"/>
    <property type="match status" value="1"/>
</dbReference>
<dbReference type="NCBIfam" id="NF000582">
    <property type="entry name" value="PRK00006.1"/>
    <property type="match status" value="1"/>
</dbReference>
<dbReference type="PANTHER" id="PTHR30272">
    <property type="entry name" value="3-HYDROXYACYL-[ACYL-CARRIER-PROTEIN] DEHYDRATASE"/>
    <property type="match status" value="1"/>
</dbReference>
<dbReference type="PANTHER" id="PTHR30272:SF1">
    <property type="entry name" value="3-HYDROXYACYL-[ACYL-CARRIER-PROTEIN] DEHYDRATASE"/>
    <property type="match status" value="1"/>
</dbReference>
<dbReference type="Pfam" id="PF07977">
    <property type="entry name" value="FabA"/>
    <property type="match status" value="1"/>
</dbReference>
<dbReference type="SUPFAM" id="SSF54637">
    <property type="entry name" value="Thioesterase/thiol ester dehydrase-isomerase"/>
    <property type="match status" value="1"/>
</dbReference>
<accession>B1JQH1</accession>
<reference key="1">
    <citation type="submission" date="2008-02" db="EMBL/GenBank/DDBJ databases">
        <title>Complete sequence of Yersinia pseudotuberculosis YPIII.</title>
        <authorList>
            <consortium name="US DOE Joint Genome Institute"/>
            <person name="Copeland A."/>
            <person name="Lucas S."/>
            <person name="Lapidus A."/>
            <person name="Glavina del Rio T."/>
            <person name="Dalin E."/>
            <person name="Tice H."/>
            <person name="Bruce D."/>
            <person name="Goodwin L."/>
            <person name="Pitluck S."/>
            <person name="Munk A.C."/>
            <person name="Brettin T."/>
            <person name="Detter J.C."/>
            <person name="Han C."/>
            <person name="Tapia R."/>
            <person name="Schmutz J."/>
            <person name="Larimer F."/>
            <person name="Land M."/>
            <person name="Hauser L."/>
            <person name="Challacombe J.F."/>
            <person name="Green L."/>
            <person name="Lindler L.E."/>
            <person name="Nikolich M.P."/>
            <person name="Richardson P."/>
        </authorList>
    </citation>
    <scope>NUCLEOTIDE SEQUENCE [LARGE SCALE GENOMIC DNA]</scope>
    <source>
        <strain>YPIII</strain>
    </source>
</reference>
<proteinExistence type="inferred from homology"/>
<feature type="chain" id="PRO_1000197309" description="3-hydroxyacyl-[acyl-carrier-protein] dehydratase FabZ">
    <location>
        <begin position="1"/>
        <end position="176"/>
    </location>
</feature>
<feature type="active site" evidence="1">
    <location>
        <position position="54"/>
    </location>
</feature>